<protein>
    <recommendedName>
        <fullName>Neb-colloostatin</fullName>
    </recommendedName>
    <alternativeName>
        <fullName>Folliculostatin</fullName>
    </alternativeName>
</protein>
<reference key="1">
    <citation type="journal article" date="1995" name="Eur. J. Biochem.">
        <title>Neb-colloostatin, a second folliculostatin of the grey fleshfly, Neobellieria bullata.</title>
        <authorList>
            <person name="Bylemans D."/>
            <person name="Proost P."/>
            <person name="Samijn B."/>
            <person name="Borovsky D."/>
            <person name="Grauwels L."/>
            <person name="Huybrechts R."/>
            <person name="van Damme J."/>
            <person name="van Beeumen J."/>
            <person name="de Loof A."/>
        </authorList>
    </citation>
    <scope>PROTEIN SEQUENCE</scope>
</reference>
<evidence type="ECO:0000305" key="1"/>
<accession>Q09148</accession>
<name>COOT_SARBU</name>
<sequence length="19" mass="1880">SIVPLGLPVPIGPIVVGPR</sequence>
<comment type="function">
    <text>Has an oostatic activity. It inhibits yolk synthesis so inhibiting the subsequent yolk deposition in previtellogenic follicles.</text>
</comment>
<comment type="caution">
    <text evidence="1">Neb-colloostatin may be proteolytically cleaved from collagen IV.</text>
</comment>
<organism>
    <name type="scientific">Sarcophaga bullata</name>
    <name type="common">Grey flesh fly</name>
    <name type="synonym">Neobellieria bullata</name>
    <dbReference type="NCBI Taxonomy" id="7385"/>
    <lineage>
        <taxon>Eukaryota</taxon>
        <taxon>Metazoa</taxon>
        <taxon>Ecdysozoa</taxon>
        <taxon>Arthropoda</taxon>
        <taxon>Hexapoda</taxon>
        <taxon>Insecta</taxon>
        <taxon>Pterygota</taxon>
        <taxon>Neoptera</taxon>
        <taxon>Endopterygota</taxon>
        <taxon>Diptera</taxon>
        <taxon>Brachycera</taxon>
        <taxon>Muscomorpha</taxon>
        <taxon>Oestroidea</taxon>
        <taxon>Sarcophagidae</taxon>
        <taxon>Sarcophaga</taxon>
        <taxon>Neobellieria</taxon>
    </lineage>
</organism>
<dbReference type="PIR" id="S69153">
    <property type="entry name" value="S69153"/>
</dbReference>
<feature type="peptide" id="PRO_0000044126" description="Neb-colloostatin">
    <location>
        <begin position="1"/>
        <end position="19"/>
    </location>
</feature>
<keyword id="KW-0903">Direct protein sequencing</keyword>
<proteinExistence type="evidence at protein level"/>